<feature type="chain" id="PRO_0000301241" description="Sec-independent protein translocase protein TatB">
    <location>
        <begin position="1"/>
        <end position="152"/>
    </location>
</feature>
<feature type="transmembrane region" description="Helical" evidence="1">
    <location>
        <begin position="1"/>
        <end position="21"/>
    </location>
</feature>
<accession>Q5LQ14</accession>
<dbReference type="EMBL" id="CP000031">
    <property type="protein sequence ID" value="AAV95927.1"/>
    <property type="molecule type" value="Genomic_DNA"/>
</dbReference>
<dbReference type="RefSeq" id="WP_011048384.1">
    <property type="nucleotide sequence ID" value="NC_003911.12"/>
</dbReference>
<dbReference type="SMR" id="Q5LQ14"/>
<dbReference type="STRING" id="246200.SPO2682"/>
<dbReference type="PaxDb" id="246200-SPO2682"/>
<dbReference type="KEGG" id="sil:SPO2682"/>
<dbReference type="eggNOG" id="COG1826">
    <property type="taxonomic scope" value="Bacteria"/>
</dbReference>
<dbReference type="HOGENOM" id="CLU_086034_1_3_5"/>
<dbReference type="OrthoDB" id="7206969at2"/>
<dbReference type="Proteomes" id="UP000001023">
    <property type="component" value="Chromosome"/>
</dbReference>
<dbReference type="GO" id="GO:0033281">
    <property type="term" value="C:TAT protein transport complex"/>
    <property type="evidence" value="ECO:0007669"/>
    <property type="project" value="UniProtKB-UniRule"/>
</dbReference>
<dbReference type="GO" id="GO:0008320">
    <property type="term" value="F:protein transmembrane transporter activity"/>
    <property type="evidence" value="ECO:0007669"/>
    <property type="project" value="UniProtKB-UniRule"/>
</dbReference>
<dbReference type="GO" id="GO:0043953">
    <property type="term" value="P:protein transport by the Tat complex"/>
    <property type="evidence" value="ECO:0007669"/>
    <property type="project" value="UniProtKB-UniRule"/>
</dbReference>
<dbReference type="Gene3D" id="1.20.5.3310">
    <property type="match status" value="1"/>
</dbReference>
<dbReference type="HAMAP" id="MF_00237">
    <property type="entry name" value="TatB"/>
    <property type="match status" value="1"/>
</dbReference>
<dbReference type="InterPro" id="IPR003369">
    <property type="entry name" value="TatA/B/E"/>
</dbReference>
<dbReference type="InterPro" id="IPR018448">
    <property type="entry name" value="TatB"/>
</dbReference>
<dbReference type="NCBIfam" id="TIGR01410">
    <property type="entry name" value="tatB"/>
    <property type="match status" value="1"/>
</dbReference>
<dbReference type="PANTHER" id="PTHR33162">
    <property type="entry name" value="SEC-INDEPENDENT PROTEIN TRANSLOCASE PROTEIN TATA, CHLOROPLASTIC"/>
    <property type="match status" value="1"/>
</dbReference>
<dbReference type="PANTHER" id="PTHR33162:SF1">
    <property type="entry name" value="SEC-INDEPENDENT PROTEIN TRANSLOCASE PROTEIN TATA, CHLOROPLASTIC"/>
    <property type="match status" value="1"/>
</dbReference>
<dbReference type="Pfam" id="PF02416">
    <property type="entry name" value="TatA_B_E"/>
    <property type="match status" value="1"/>
</dbReference>
<dbReference type="PRINTS" id="PR01506">
    <property type="entry name" value="TATBPROTEIN"/>
</dbReference>
<evidence type="ECO:0000255" key="1">
    <source>
        <dbReference type="HAMAP-Rule" id="MF_00237"/>
    </source>
</evidence>
<gene>
    <name evidence="1" type="primary">tatB</name>
    <name type="ordered locus">SPO2682</name>
</gene>
<comment type="function">
    <text evidence="1">Part of the twin-arginine translocation (Tat) system that transports large folded proteins containing a characteristic twin-arginine motif in their signal peptide across membranes. Together with TatC, TatB is part of a receptor directly interacting with Tat signal peptides. TatB may form an oligomeric binding site that transiently accommodates folded Tat precursor proteins before their translocation.</text>
</comment>
<comment type="subunit">
    <text evidence="1">The Tat system comprises two distinct complexes: a TatABC complex, containing multiple copies of TatA, TatB and TatC subunits, and a separate TatA complex, containing only TatA subunits. Substrates initially bind to the TatABC complex, which probably triggers association of the separate TatA complex to form the active translocon.</text>
</comment>
<comment type="subcellular location">
    <subcellularLocation>
        <location evidence="1">Cell inner membrane</location>
        <topology evidence="1">Single-pass membrane protein</topology>
    </subcellularLocation>
</comment>
<comment type="similarity">
    <text evidence="1">Belongs to the TatB family.</text>
</comment>
<sequence length="152" mass="16242">MFDLGWSELLVIGVVALIVVGPKDLPVLFRNVGRWVGKARGLAREFSRAMNDAADEAGVKDISKGLKAATNPVDAALDGVRKAATDFKTDLDPTKYNPDSETGKLAAERAEQAKKIQAATARVAAERRLREATAELEKAKDAEAALKPGPET</sequence>
<name>TATB_RUEPO</name>
<protein>
    <recommendedName>
        <fullName evidence="1">Sec-independent protein translocase protein TatB</fullName>
    </recommendedName>
</protein>
<proteinExistence type="inferred from homology"/>
<organism>
    <name type="scientific">Ruegeria pomeroyi (strain ATCC 700808 / DSM 15171 / DSS-3)</name>
    <name type="common">Silicibacter pomeroyi</name>
    <dbReference type="NCBI Taxonomy" id="246200"/>
    <lineage>
        <taxon>Bacteria</taxon>
        <taxon>Pseudomonadati</taxon>
        <taxon>Pseudomonadota</taxon>
        <taxon>Alphaproteobacteria</taxon>
        <taxon>Rhodobacterales</taxon>
        <taxon>Roseobacteraceae</taxon>
        <taxon>Ruegeria</taxon>
    </lineage>
</organism>
<keyword id="KW-0997">Cell inner membrane</keyword>
<keyword id="KW-1003">Cell membrane</keyword>
<keyword id="KW-0472">Membrane</keyword>
<keyword id="KW-0653">Protein transport</keyword>
<keyword id="KW-1185">Reference proteome</keyword>
<keyword id="KW-0811">Translocation</keyword>
<keyword id="KW-0812">Transmembrane</keyword>
<keyword id="KW-1133">Transmembrane helix</keyword>
<keyword id="KW-0813">Transport</keyword>
<reference key="1">
    <citation type="journal article" date="2004" name="Nature">
        <title>Genome sequence of Silicibacter pomeroyi reveals adaptations to the marine environment.</title>
        <authorList>
            <person name="Moran M.A."/>
            <person name="Buchan A."/>
            <person name="Gonzalez J.M."/>
            <person name="Heidelberg J.F."/>
            <person name="Whitman W.B."/>
            <person name="Kiene R.P."/>
            <person name="Henriksen J.R."/>
            <person name="King G.M."/>
            <person name="Belas R."/>
            <person name="Fuqua C."/>
            <person name="Brinkac L.M."/>
            <person name="Lewis M."/>
            <person name="Johri S."/>
            <person name="Weaver B."/>
            <person name="Pai G."/>
            <person name="Eisen J.A."/>
            <person name="Rahe E."/>
            <person name="Sheldon W.M."/>
            <person name="Ye W."/>
            <person name="Miller T.R."/>
            <person name="Carlton J."/>
            <person name="Rasko D.A."/>
            <person name="Paulsen I.T."/>
            <person name="Ren Q."/>
            <person name="Daugherty S.C."/>
            <person name="DeBoy R.T."/>
            <person name="Dodson R.J."/>
            <person name="Durkin A.S."/>
            <person name="Madupu R."/>
            <person name="Nelson W.C."/>
            <person name="Sullivan S.A."/>
            <person name="Rosovitz M.J."/>
            <person name="Haft D.H."/>
            <person name="Selengut J."/>
            <person name="Ward N."/>
        </authorList>
    </citation>
    <scope>NUCLEOTIDE SEQUENCE [LARGE SCALE GENOMIC DNA]</scope>
    <source>
        <strain>ATCC 700808 / DSM 15171 / DSS-3</strain>
    </source>
</reference>
<reference key="2">
    <citation type="journal article" date="2014" name="Stand. Genomic Sci.">
        <title>An updated genome annotation for the model marine bacterium Ruegeria pomeroyi DSS-3.</title>
        <authorList>
            <person name="Rivers A.R."/>
            <person name="Smith C.B."/>
            <person name="Moran M.A."/>
        </authorList>
    </citation>
    <scope>GENOME REANNOTATION</scope>
    <source>
        <strain>ATCC 700808 / DSM 15171 / DSS-3</strain>
    </source>
</reference>